<organism>
    <name type="scientific">Xylella fastidiosa (strain Temecula1 / ATCC 700964)</name>
    <dbReference type="NCBI Taxonomy" id="183190"/>
    <lineage>
        <taxon>Bacteria</taxon>
        <taxon>Pseudomonadati</taxon>
        <taxon>Pseudomonadota</taxon>
        <taxon>Gammaproteobacteria</taxon>
        <taxon>Lysobacterales</taxon>
        <taxon>Lysobacteraceae</taxon>
        <taxon>Xylella</taxon>
    </lineage>
</organism>
<proteinExistence type="inferred from homology"/>
<dbReference type="EC" id="2.7.1.2" evidence="1"/>
<dbReference type="EMBL" id="AE009442">
    <property type="protein sequence ID" value="AAO28225.1"/>
    <property type="molecule type" value="Genomic_DNA"/>
</dbReference>
<dbReference type="RefSeq" id="WP_004089300.1">
    <property type="nucleotide sequence ID" value="NC_004556.1"/>
</dbReference>
<dbReference type="SMR" id="Q87EG6"/>
<dbReference type="KEGG" id="xft:PD_0345"/>
<dbReference type="HOGENOM" id="CLU_042582_1_0_6"/>
<dbReference type="Proteomes" id="UP000002516">
    <property type="component" value="Chromosome"/>
</dbReference>
<dbReference type="GO" id="GO:0005829">
    <property type="term" value="C:cytosol"/>
    <property type="evidence" value="ECO:0007669"/>
    <property type="project" value="TreeGrafter"/>
</dbReference>
<dbReference type="GO" id="GO:0005524">
    <property type="term" value="F:ATP binding"/>
    <property type="evidence" value="ECO:0007669"/>
    <property type="project" value="UniProtKB-UniRule"/>
</dbReference>
<dbReference type="GO" id="GO:0005536">
    <property type="term" value="F:D-glucose binding"/>
    <property type="evidence" value="ECO:0007669"/>
    <property type="project" value="InterPro"/>
</dbReference>
<dbReference type="GO" id="GO:0004340">
    <property type="term" value="F:glucokinase activity"/>
    <property type="evidence" value="ECO:0007669"/>
    <property type="project" value="UniProtKB-UniRule"/>
</dbReference>
<dbReference type="GO" id="GO:0006096">
    <property type="term" value="P:glycolytic process"/>
    <property type="evidence" value="ECO:0007669"/>
    <property type="project" value="UniProtKB-UniRule"/>
</dbReference>
<dbReference type="CDD" id="cd24008">
    <property type="entry name" value="ASKHA_NBD_GLK"/>
    <property type="match status" value="1"/>
</dbReference>
<dbReference type="Gene3D" id="3.30.420.40">
    <property type="match status" value="1"/>
</dbReference>
<dbReference type="Gene3D" id="3.40.367.20">
    <property type="match status" value="1"/>
</dbReference>
<dbReference type="HAMAP" id="MF_00524">
    <property type="entry name" value="Glucokinase"/>
    <property type="match status" value="1"/>
</dbReference>
<dbReference type="InterPro" id="IPR043129">
    <property type="entry name" value="ATPase_NBD"/>
</dbReference>
<dbReference type="InterPro" id="IPR050201">
    <property type="entry name" value="Bacterial_glucokinase"/>
</dbReference>
<dbReference type="InterPro" id="IPR003836">
    <property type="entry name" value="Glucokinase"/>
</dbReference>
<dbReference type="NCBIfam" id="TIGR00749">
    <property type="entry name" value="glk"/>
    <property type="match status" value="1"/>
</dbReference>
<dbReference type="PANTHER" id="PTHR47690">
    <property type="entry name" value="GLUCOKINASE"/>
    <property type="match status" value="1"/>
</dbReference>
<dbReference type="PANTHER" id="PTHR47690:SF1">
    <property type="entry name" value="GLUCOKINASE"/>
    <property type="match status" value="1"/>
</dbReference>
<dbReference type="Pfam" id="PF02685">
    <property type="entry name" value="Glucokinase"/>
    <property type="match status" value="1"/>
</dbReference>
<dbReference type="SUPFAM" id="SSF53067">
    <property type="entry name" value="Actin-like ATPase domain"/>
    <property type="match status" value="1"/>
</dbReference>
<reference key="1">
    <citation type="journal article" date="2003" name="J. Bacteriol.">
        <title>Comparative analyses of the complete genome sequences of Pierce's disease and citrus variegated chlorosis strains of Xylella fastidiosa.</title>
        <authorList>
            <person name="Van Sluys M.A."/>
            <person name="de Oliveira M.C."/>
            <person name="Monteiro-Vitorello C.B."/>
            <person name="Miyaki C.Y."/>
            <person name="Furlan L.R."/>
            <person name="Camargo L.E.A."/>
            <person name="da Silva A.C.R."/>
            <person name="Moon D.H."/>
            <person name="Takita M.A."/>
            <person name="Lemos E.G.M."/>
            <person name="Machado M.A."/>
            <person name="Ferro M.I.T."/>
            <person name="da Silva F.R."/>
            <person name="Goldman M.H.S."/>
            <person name="Goldman G.H."/>
            <person name="Lemos M.V.F."/>
            <person name="El-Dorry H."/>
            <person name="Tsai S.M."/>
            <person name="Carrer H."/>
            <person name="Carraro D.M."/>
            <person name="de Oliveira R.C."/>
            <person name="Nunes L.R."/>
            <person name="Siqueira W.J."/>
            <person name="Coutinho L.L."/>
            <person name="Kimura E.T."/>
            <person name="Ferro E.S."/>
            <person name="Harakava R."/>
            <person name="Kuramae E.E."/>
            <person name="Marino C.L."/>
            <person name="Giglioti E."/>
            <person name="Abreu I.L."/>
            <person name="Alves L.M.C."/>
            <person name="do Amaral A.M."/>
            <person name="Baia G.S."/>
            <person name="Blanco S.R."/>
            <person name="Brito M.S."/>
            <person name="Cannavan F.S."/>
            <person name="Celestino A.V."/>
            <person name="da Cunha A.F."/>
            <person name="Fenille R.C."/>
            <person name="Ferro J.A."/>
            <person name="Formighieri E.F."/>
            <person name="Kishi L.T."/>
            <person name="Leoni S.G."/>
            <person name="Oliveira A.R."/>
            <person name="Rosa V.E. Jr."/>
            <person name="Sassaki F.T."/>
            <person name="Sena J.A.D."/>
            <person name="de Souza A.A."/>
            <person name="Truffi D."/>
            <person name="Tsukumo F."/>
            <person name="Yanai G.M."/>
            <person name="Zaros L.G."/>
            <person name="Civerolo E.L."/>
            <person name="Simpson A.J.G."/>
            <person name="Almeida N.F. Jr."/>
            <person name="Setubal J.C."/>
            <person name="Kitajima J.P."/>
        </authorList>
    </citation>
    <scope>NUCLEOTIDE SEQUENCE [LARGE SCALE GENOMIC DNA]</scope>
    <source>
        <strain>Temecula1 / ATCC 700964</strain>
    </source>
</reference>
<sequence>MNAPQAPVLVADIGGTNARFALANPTLTSAPLLNDSMREFAVIEFPSLGEAAQHYLHHIGIHTTKGVFAIAGHVDGDEARITNHPWVITRTRTATMLGFDTLHLINDFVAQAMAISVLGPQDVIQIGSAKWEQFPLSAATRNYGIIGPGTGLGVGGLMIRNGRCYPLETEGGHVSFPPSTPEEIRILEILSQQFGRVSNERLISGPGIVNIHRALSEIDGIDPGPLRPQDITMRAADGDIRATRTINLFCNIFGTITGDLVLIQGAWDGVFLTGGLVPKLLNSIQHSGFRQRFEHKGRFSAIMARIPSLAVIHPHPGLLGAAAYARDTEQVPQEIKA</sequence>
<comment type="catalytic activity">
    <reaction evidence="1">
        <text>D-glucose + ATP = D-glucose 6-phosphate + ADP + H(+)</text>
        <dbReference type="Rhea" id="RHEA:17825"/>
        <dbReference type="ChEBI" id="CHEBI:4167"/>
        <dbReference type="ChEBI" id="CHEBI:15378"/>
        <dbReference type="ChEBI" id="CHEBI:30616"/>
        <dbReference type="ChEBI" id="CHEBI:61548"/>
        <dbReference type="ChEBI" id="CHEBI:456216"/>
        <dbReference type="EC" id="2.7.1.2"/>
    </reaction>
</comment>
<comment type="subcellular location">
    <subcellularLocation>
        <location evidence="1">Cytoplasm</location>
    </subcellularLocation>
</comment>
<comment type="similarity">
    <text evidence="1">Belongs to the bacterial glucokinase family.</text>
</comment>
<protein>
    <recommendedName>
        <fullName evidence="1">Glucokinase</fullName>
        <ecNumber evidence="1">2.7.1.2</ecNumber>
    </recommendedName>
    <alternativeName>
        <fullName evidence="1">Glucose kinase</fullName>
    </alternativeName>
</protein>
<name>GLK_XYLFT</name>
<evidence type="ECO:0000255" key="1">
    <source>
        <dbReference type="HAMAP-Rule" id="MF_00524"/>
    </source>
</evidence>
<keyword id="KW-0067">ATP-binding</keyword>
<keyword id="KW-0963">Cytoplasm</keyword>
<keyword id="KW-0324">Glycolysis</keyword>
<keyword id="KW-0418">Kinase</keyword>
<keyword id="KW-0547">Nucleotide-binding</keyword>
<keyword id="KW-1185">Reference proteome</keyword>
<keyword id="KW-0808">Transferase</keyword>
<gene>
    <name evidence="1" type="primary">glk</name>
    <name type="ordered locus">PD_0345</name>
</gene>
<accession>Q87EG6</accession>
<feature type="chain" id="PRO_0000215144" description="Glucokinase">
    <location>
        <begin position="1"/>
        <end position="337"/>
    </location>
</feature>
<feature type="binding site" evidence="1">
    <location>
        <begin position="11"/>
        <end position="16"/>
    </location>
    <ligand>
        <name>ATP</name>
        <dbReference type="ChEBI" id="CHEBI:30616"/>
    </ligand>
</feature>